<sequence>MTAVTECFRSLRSQGNCALIPFITAGDPDLSTTAQALRILDRAGADLIELGVPYSDPLADGPVIQSAATRALNRGVKLEDVLEIVKNAQGEVKAPIILFTYYNPIYHRGIDVFLDQIKAAGVSGLVVPDLPLEEAESLLQPAAAKGIEVILLVAPTSPPERIQAIALQSQGFIYLVSVTGVTGMRKQVATRVEELLDSIRSVTDKPVGVGFGISEPTQALQVKNWGADAVIVGSAMVKRLADNSPSDGLKSLEEFCRSLKQAIQ</sequence>
<comment type="function">
    <text evidence="1">The alpha subunit is responsible for the aldol cleavage of indoleglycerol phosphate to indole and glyceraldehyde 3-phosphate.</text>
</comment>
<comment type="catalytic activity">
    <reaction evidence="1">
        <text>(1S,2R)-1-C-(indol-3-yl)glycerol 3-phosphate + L-serine = D-glyceraldehyde 3-phosphate + L-tryptophan + H2O</text>
        <dbReference type="Rhea" id="RHEA:10532"/>
        <dbReference type="ChEBI" id="CHEBI:15377"/>
        <dbReference type="ChEBI" id="CHEBI:33384"/>
        <dbReference type="ChEBI" id="CHEBI:57912"/>
        <dbReference type="ChEBI" id="CHEBI:58866"/>
        <dbReference type="ChEBI" id="CHEBI:59776"/>
        <dbReference type="EC" id="4.2.1.20"/>
    </reaction>
</comment>
<comment type="pathway">
    <text evidence="1">Amino-acid biosynthesis; L-tryptophan biosynthesis; L-tryptophan from chorismate: step 5/5.</text>
</comment>
<comment type="subunit">
    <text evidence="1">Tetramer of two alpha and two beta chains.</text>
</comment>
<comment type="similarity">
    <text evidence="1">Belongs to the TrpA family.</text>
</comment>
<evidence type="ECO:0000255" key="1">
    <source>
        <dbReference type="HAMAP-Rule" id="MF_00131"/>
    </source>
</evidence>
<gene>
    <name evidence="1" type="primary">trpA</name>
    <name type="ordered locus">MAE_20980</name>
</gene>
<keyword id="KW-0028">Amino-acid biosynthesis</keyword>
<keyword id="KW-0057">Aromatic amino acid biosynthesis</keyword>
<keyword id="KW-0456">Lyase</keyword>
<keyword id="KW-0822">Tryptophan biosynthesis</keyword>
<accession>B0JXU3</accession>
<proteinExistence type="inferred from homology"/>
<reference key="1">
    <citation type="journal article" date="2007" name="DNA Res.">
        <title>Complete genomic structure of the bloom-forming toxic cyanobacterium Microcystis aeruginosa NIES-843.</title>
        <authorList>
            <person name="Kaneko T."/>
            <person name="Nakajima N."/>
            <person name="Okamoto S."/>
            <person name="Suzuki I."/>
            <person name="Tanabe Y."/>
            <person name="Tamaoki M."/>
            <person name="Nakamura Y."/>
            <person name="Kasai F."/>
            <person name="Watanabe A."/>
            <person name="Kawashima K."/>
            <person name="Kishida Y."/>
            <person name="Ono A."/>
            <person name="Shimizu Y."/>
            <person name="Takahashi C."/>
            <person name="Minami C."/>
            <person name="Fujishiro T."/>
            <person name="Kohara M."/>
            <person name="Katoh M."/>
            <person name="Nakazaki N."/>
            <person name="Nakayama S."/>
            <person name="Yamada M."/>
            <person name="Tabata S."/>
            <person name="Watanabe M.M."/>
        </authorList>
    </citation>
    <scope>NUCLEOTIDE SEQUENCE [LARGE SCALE GENOMIC DNA]</scope>
    <source>
        <strain>NIES-843 / IAM M-247</strain>
    </source>
</reference>
<protein>
    <recommendedName>
        <fullName evidence="1">Tryptophan synthase alpha chain</fullName>
        <ecNumber evidence="1">4.2.1.20</ecNumber>
    </recommendedName>
</protein>
<organism>
    <name type="scientific">Microcystis aeruginosa (strain NIES-843 / IAM M-2473)</name>
    <dbReference type="NCBI Taxonomy" id="449447"/>
    <lineage>
        <taxon>Bacteria</taxon>
        <taxon>Bacillati</taxon>
        <taxon>Cyanobacteriota</taxon>
        <taxon>Cyanophyceae</taxon>
        <taxon>Oscillatoriophycideae</taxon>
        <taxon>Chroococcales</taxon>
        <taxon>Microcystaceae</taxon>
        <taxon>Microcystis</taxon>
    </lineage>
</organism>
<dbReference type="EC" id="4.2.1.20" evidence="1"/>
<dbReference type="EMBL" id="AP009552">
    <property type="protein sequence ID" value="BAG01920.1"/>
    <property type="molecule type" value="Genomic_DNA"/>
</dbReference>
<dbReference type="RefSeq" id="WP_012265329.1">
    <property type="nucleotide sequence ID" value="NC_010296.1"/>
</dbReference>
<dbReference type="SMR" id="B0JXU3"/>
<dbReference type="STRING" id="449447.MAE_20980"/>
<dbReference type="PaxDb" id="449447-MAE_20980"/>
<dbReference type="EnsemblBacteria" id="BAG01920">
    <property type="protein sequence ID" value="BAG01920"/>
    <property type="gene ID" value="MAE_20980"/>
</dbReference>
<dbReference type="KEGG" id="mar:MAE_20980"/>
<dbReference type="PATRIC" id="fig|449447.4.peg.1926"/>
<dbReference type="eggNOG" id="COG0159">
    <property type="taxonomic scope" value="Bacteria"/>
</dbReference>
<dbReference type="HOGENOM" id="CLU_016734_0_2_3"/>
<dbReference type="BioCyc" id="MAER449447:MAE_RS09160-MONOMER"/>
<dbReference type="UniPathway" id="UPA00035">
    <property type="reaction ID" value="UER00044"/>
</dbReference>
<dbReference type="Proteomes" id="UP000001510">
    <property type="component" value="Chromosome"/>
</dbReference>
<dbReference type="GO" id="GO:0005829">
    <property type="term" value="C:cytosol"/>
    <property type="evidence" value="ECO:0007669"/>
    <property type="project" value="TreeGrafter"/>
</dbReference>
<dbReference type="GO" id="GO:0004834">
    <property type="term" value="F:tryptophan synthase activity"/>
    <property type="evidence" value="ECO:0007669"/>
    <property type="project" value="UniProtKB-UniRule"/>
</dbReference>
<dbReference type="CDD" id="cd04724">
    <property type="entry name" value="Tryptophan_synthase_alpha"/>
    <property type="match status" value="1"/>
</dbReference>
<dbReference type="FunFam" id="3.20.20.70:FF:000107">
    <property type="entry name" value="Tryptophan synthase alpha chain, chloroplastic"/>
    <property type="match status" value="1"/>
</dbReference>
<dbReference type="Gene3D" id="3.20.20.70">
    <property type="entry name" value="Aldolase class I"/>
    <property type="match status" value="1"/>
</dbReference>
<dbReference type="HAMAP" id="MF_00131">
    <property type="entry name" value="Trp_synth_alpha"/>
    <property type="match status" value="1"/>
</dbReference>
<dbReference type="InterPro" id="IPR013785">
    <property type="entry name" value="Aldolase_TIM"/>
</dbReference>
<dbReference type="InterPro" id="IPR011060">
    <property type="entry name" value="RibuloseP-bd_barrel"/>
</dbReference>
<dbReference type="InterPro" id="IPR018204">
    <property type="entry name" value="Trp_synthase_alpha_AS"/>
</dbReference>
<dbReference type="InterPro" id="IPR002028">
    <property type="entry name" value="Trp_synthase_suA"/>
</dbReference>
<dbReference type="NCBIfam" id="TIGR00262">
    <property type="entry name" value="trpA"/>
    <property type="match status" value="1"/>
</dbReference>
<dbReference type="PANTHER" id="PTHR43406:SF1">
    <property type="entry name" value="TRYPTOPHAN SYNTHASE ALPHA CHAIN, CHLOROPLASTIC"/>
    <property type="match status" value="1"/>
</dbReference>
<dbReference type="PANTHER" id="PTHR43406">
    <property type="entry name" value="TRYPTOPHAN SYNTHASE, ALPHA CHAIN"/>
    <property type="match status" value="1"/>
</dbReference>
<dbReference type="Pfam" id="PF00290">
    <property type="entry name" value="Trp_syntA"/>
    <property type="match status" value="1"/>
</dbReference>
<dbReference type="SUPFAM" id="SSF51366">
    <property type="entry name" value="Ribulose-phoshate binding barrel"/>
    <property type="match status" value="1"/>
</dbReference>
<dbReference type="PROSITE" id="PS00167">
    <property type="entry name" value="TRP_SYNTHASE_ALPHA"/>
    <property type="match status" value="1"/>
</dbReference>
<feature type="chain" id="PRO_1000076359" description="Tryptophan synthase alpha chain">
    <location>
        <begin position="1"/>
        <end position="264"/>
    </location>
</feature>
<feature type="active site" description="Proton acceptor" evidence="1">
    <location>
        <position position="49"/>
    </location>
</feature>
<feature type="active site" description="Proton acceptor" evidence="1">
    <location>
        <position position="60"/>
    </location>
</feature>
<name>TRPA_MICAN</name>